<gene>
    <name type="primary">POU2F2</name>
    <name type="synonym">OCT2</name>
    <name type="synonym">OTF2</name>
</gene>
<proteinExistence type="evidence at transcript level"/>
<name>PO2F2_PIG</name>
<reference key="1">
    <citation type="journal article" date="1994" name="Anim. Genet.">
        <title>Cloning, sequencing and restriction fragment length polymorphism analysis of a porcine cDNA for OCT2.</title>
        <authorList>
            <person name="Tuggle C.K."/>
            <person name="Helm J."/>
            <person name="Rothschild M.F."/>
        </authorList>
    </citation>
    <scope>NUCLEOTIDE SEQUENCE [MRNA]</scope>
    <source>
        <tissue>Spleen</tissue>
    </source>
</reference>
<reference key="2">
    <citation type="journal article" date="1993" name="J. Anim. Sci.">
        <title>Cloning and sequence analysis of the swine Oct-2 POU-domain genomic region.</title>
        <authorList>
            <person name="Tuggle C.K."/>
        </authorList>
    </citation>
    <scope>NUCLEOTIDE SEQUENCE [GENOMIC DNA] OF 210-350</scope>
    <source>
        <strain>Duroc</strain>
    </source>
</reference>
<protein>
    <recommendedName>
        <fullName>POU domain, class 2, transcription factor 2</fullName>
    </recommendedName>
    <alternativeName>
        <fullName>Lymphoid-restricted immunoglobulin octamer-binding protein NF-A2</fullName>
    </alternativeName>
    <alternativeName>
        <fullName>Octamer-binding protein 2</fullName>
        <shortName>Oct-2</shortName>
    </alternativeName>
    <alternativeName>
        <fullName>Octamer-binding transcription factor 2</fullName>
        <shortName>OTF-2</shortName>
    </alternativeName>
</protein>
<dbReference type="EMBL" id="U00794">
    <property type="protein sequence ID" value="AAA80148.1"/>
    <property type="molecule type" value="mRNA"/>
</dbReference>
<dbReference type="EMBL" id="L03842">
    <property type="protein sequence ID" value="AAA74657.1"/>
    <property type="molecule type" value="Genomic_DNA"/>
</dbReference>
<dbReference type="PIR" id="I47154">
    <property type="entry name" value="I47154"/>
</dbReference>
<dbReference type="RefSeq" id="NP_999205.1">
    <property type="nucleotide sequence ID" value="NM_214040.1"/>
</dbReference>
<dbReference type="SMR" id="Q29013"/>
<dbReference type="FunCoup" id="Q29013">
    <property type="interactions" value="263"/>
</dbReference>
<dbReference type="STRING" id="9823.ENSSSCP00000060397"/>
<dbReference type="GlyGen" id="Q29013">
    <property type="glycosylation" value="1 site"/>
</dbReference>
<dbReference type="GeneID" id="397105"/>
<dbReference type="KEGG" id="ssc:397105"/>
<dbReference type="CTD" id="5452"/>
<dbReference type="InParanoid" id="Q29013"/>
<dbReference type="OrthoDB" id="6358449at2759"/>
<dbReference type="ChiTaRS" id="SLC22A2">
    <property type="organism name" value="pig"/>
</dbReference>
<dbReference type="Proteomes" id="UP000008227">
    <property type="component" value="Unplaced"/>
</dbReference>
<dbReference type="Proteomes" id="UP000314985">
    <property type="component" value="Unplaced"/>
</dbReference>
<dbReference type="Proteomes" id="UP000694570">
    <property type="component" value="Unplaced"/>
</dbReference>
<dbReference type="Proteomes" id="UP000694571">
    <property type="component" value="Unplaced"/>
</dbReference>
<dbReference type="Proteomes" id="UP000694720">
    <property type="component" value="Unplaced"/>
</dbReference>
<dbReference type="Proteomes" id="UP000694722">
    <property type="component" value="Unplaced"/>
</dbReference>
<dbReference type="Proteomes" id="UP000694723">
    <property type="component" value="Unplaced"/>
</dbReference>
<dbReference type="Proteomes" id="UP000694724">
    <property type="component" value="Unplaced"/>
</dbReference>
<dbReference type="Proteomes" id="UP000694725">
    <property type="component" value="Unplaced"/>
</dbReference>
<dbReference type="Proteomes" id="UP000694726">
    <property type="component" value="Unplaced"/>
</dbReference>
<dbReference type="Proteomes" id="UP000694727">
    <property type="component" value="Unplaced"/>
</dbReference>
<dbReference type="Proteomes" id="UP000694728">
    <property type="component" value="Unplaced"/>
</dbReference>
<dbReference type="GO" id="GO:0005634">
    <property type="term" value="C:nucleus"/>
    <property type="evidence" value="ECO:0007669"/>
    <property type="project" value="UniProtKB-SubCell"/>
</dbReference>
<dbReference type="GO" id="GO:0003700">
    <property type="term" value="F:DNA-binding transcription factor activity"/>
    <property type="evidence" value="ECO:0000250"/>
    <property type="project" value="UniProtKB"/>
</dbReference>
<dbReference type="GO" id="GO:0000981">
    <property type="term" value="F:DNA-binding transcription factor activity, RNA polymerase II-specific"/>
    <property type="evidence" value="ECO:0000318"/>
    <property type="project" value="GO_Central"/>
</dbReference>
<dbReference type="GO" id="GO:0000978">
    <property type="term" value="F:RNA polymerase II cis-regulatory region sequence-specific DNA binding"/>
    <property type="evidence" value="ECO:0000318"/>
    <property type="project" value="GO_Central"/>
</dbReference>
<dbReference type="GO" id="GO:0000976">
    <property type="term" value="F:transcription cis-regulatory region binding"/>
    <property type="evidence" value="ECO:0000250"/>
    <property type="project" value="UniProtKB"/>
</dbReference>
<dbReference type="GO" id="GO:0098586">
    <property type="term" value="P:cellular response to virus"/>
    <property type="evidence" value="ECO:0000250"/>
    <property type="project" value="UniProtKB"/>
</dbReference>
<dbReference type="GO" id="GO:0032755">
    <property type="term" value="P:positive regulation of interleukin-6 production"/>
    <property type="evidence" value="ECO:0000250"/>
    <property type="project" value="UniProtKB"/>
</dbReference>
<dbReference type="GO" id="GO:0045944">
    <property type="term" value="P:positive regulation of transcription by RNA polymerase II"/>
    <property type="evidence" value="ECO:0000250"/>
    <property type="project" value="UniProtKB"/>
</dbReference>
<dbReference type="GO" id="GO:0006357">
    <property type="term" value="P:regulation of transcription by RNA polymerase II"/>
    <property type="evidence" value="ECO:0000318"/>
    <property type="project" value="GO_Central"/>
</dbReference>
<dbReference type="CDD" id="cd00086">
    <property type="entry name" value="homeodomain"/>
    <property type="match status" value="1"/>
</dbReference>
<dbReference type="FunFam" id="1.10.10.60:FF:000005">
    <property type="entry name" value="POU domain protein"/>
    <property type="match status" value="1"/>
</dbReference>
<dbReference type="FunFam" id="1.10.260.40:FF:000001">
    <property type="entry name" value="POU domain protein"/>
    <property type="match status" value="1"/>
</dbReference>
<dbReference type="Gene3D" id="1.10.10.60">
    <property type="entry name" value="Homeodomain-like"/>
    <property type="match status" value="1"/>
</dbReference>
<dbReference type="Gene3D" id="1.10.260.40">
    <property type="entry name" value="lambda repressor-like DNA-binding domains"/>
    <property type="match status" value="1"/>
</dbReference>
<dbReference type="InterPro" id="IPR001356">
    <property type="entry name" value="HD"/>
</dbReference>
<dbReference type="InterPro" id="IPR017970">
    <property type="entry name" value="Homeobox_CS"/>
</dbReference>
<dbReference type="InterPro" id="IPR009057">
    <property type="entry name" value="Homeodomain-like_sf"/>
</dbReference>
<dbReference type="InterPro" id="IPR010982">
    <property type="entry name" value="Lambda_DNA-bd_dom_sf"/>
</dbReference>
<dbReference type="InterPro" id="IPR013847">
    <property type="entry name" value="POU"/>
</dbReference>
<dbReference type="InterPro" id="IPR000327">
    <property type="entry name" value="POU_dom"/>
</dbReference>
<dbReference type="InterPro" id="IPR050255">
    <property type="entry name" value="POU_domain_TF"/>
</dbReference>
<dbReference type="InterPro" id="IPR000972">
    <property type="entry name" value="TF_octamer"/>
</dbReference>
<dbReference type="PANTHER" id="PTHR11636">
    <property type="entry name" value="POU DOMAIN"/>
    <property type="match status" value="1"/>
</dbReference>
<dbReference type="PANTHER" id="PTHR11636:SF46">
    <property type="entry name" value="POU DOMAIN, CLASS 2, TRANSCRIPTION FACTOR 2"/>
    <property type="match status" value="1"/>
</dbReference>
<dbReference type="Pfam" id="PF00046">
    <property type="entry name" value="Homeodomain"/>
    <property type="match status" value="1"/>
</dbReference>
<dbReference type="Pfam" id="PF00157">
    <property type="entry name" value="Pou"/>
    <property type="match status" value="1"/>
</dbReference>
<dbReference type="PRINTS" id="PR00029">
    <property type="entry name" value="OCTAMER"/>
</dbReference>
<dbReference type="PRINTS" id="PR00028">
    <property type="entry name" value="POUDOMAIN"/>
</dbReference>
<dbReference type="SMART" id="SM00389">
    <property type="entry name" value="HOX"/>
    <property type="match status" value="1"/>
</dbReference>
<dbReference type="SMART" id="SM00352">
    <property type="entry name" value="POU"/>
    <property type="match status" value="1"/>
</dbReference>
<dbReference type="SUPFAM" id="SSF46689">
    <property type="entry name" value="Homeodomain-like"/>
    <property type="match status" value="1"/>
</dbReference>
<dbReference type="SUPFAM" id="SSF47413">
    <property type="entry name" value="lambda repressor-like DNA-binding domains"/>
    <property type="match status" value="1"/>
</dbReference>
<dbReference type="PROSITE" id="PS00027">
    <property type="entry name" value="HOMEOBOX_1"/>
    <property type="match status" value="1"/>
</dbReference>
<dbReference type="PROSITE" id="PS50071">
    <property type="entry name" value="HOMEOBOX_2"/>
    <property type="match status" value="1"/>
</dbReference>
<dbReference type="PROSITE" id="PS00035">
    <property type="entry name" value="POU_1"/>
    <property type="match status" value="1"/>
</dbReference>
<dbReference type="PROSITE" id="PS00465">
    <property type="entry name" value="POU_2"/>
    <property type="match status" value="1"/>
</dbReference>
<dbReference type="PROSITE" id="PS51179">
    <property type="entry name" value="POU_3"/>
    <property type="match status" value="1"/>
</dbReference>
<organism>
    <name type="scientific">Sus scrofa</name>
    <name type="common">Pig</name>
    <dbReference type="NCBI Taxonomy" id="9823"/>
    <lineage>
        <taxon>Eukaryota</taxon>
        <taxon>Metazoa</taxon>
        <taxon>Chordata</taxon>
        <taxon>Craniata</taxon>
        <taxon>Vertebrata</taxon>
        <taxon>Euteleostomi</taxon>
        <taxon>Mammalia</taxon>
        <taxon>Eutheria</taxon>
        <taxon>Laurasiatheria</taxon>
        <taxon>Artiodactyla</taxon>
        <taxon>Suina</taxon>
        <taxon>Suidae</taxon>
        <taxon>Sus</taxon>
    </lineage>
</organism>
<feature type="chain" id="PRO_0000100716" description="POU domain, class 2, transcription factor 2">
    <location>
        <begin position="1"/>
        <end position="478"/>
    </location>
</feature>
<feature type="domain" description="POU-specific" evidence="4">
    <location>
        <begin position="195"/>
        <end position="269"/>
    </location>
</feature>
<feature type="DNA-binding region" description="Homeobox" evidence="3">
    <location>
        <begin position="297"/>
        <end position="356"/>
    </location>
</feature>
<feature type="region of interest" description="Disordered" evidence="5">
    <location>
        <begin position="1"/>
        <end position="82"/>
    </location>
</feature>
<feature type="region of interest" description="Disordered" evidence="5">
    <location>
        <begin position="167"/>
        <end position="199"/>
    </location>
</feature>
<feature type="region of interest" description="Disordered" evidence="5">
    <location>
        <begin position="275"/>
        <end position="298"/>
    </location>
</feature>
<feature type="region of interest" description="Disordered" evidence="5">
    <location>
        <begin position="357"/>
        <end position="391"/>
    </location>
</feature>
<feature type="region of interest" description="Leucine-zipper">
    <location>
        <begin position="389"/>
        <end position="410"/>
    </location>
</feature>
<feature type="region of interest" description="Disordered" evidence="5">
    <location>
        <begin position="409"/>
        <end position="478"/>
    </location>
</feature>
<feature type="compositionally biased region" description="Basic and acidic residues" evidence="5">
    <location>
        <begin position="12"/>
        <end position="37"/>
    </location>
</feature>
<feature type="compositionally biased region" description="Polar residues" evidence="5">
    <location>
        <begin position="38"/>
        <end position="60"/>
    </location>
</feature>
<feature type="compositionally biased region" description="Polar residues" evidence="5">
    <location>
        <begin position="275"/>
        <end position="285"/>
    </location>
</feature>
<feature type="compositionally biased region" description="Gly residues" evidence="5">
    <location>
        <begin position="416"/>
        <end position="425"/>
    </location>
</feature>
<feature type="sequence conflict" description="In Ref. 2; AAA74657." evidence="6" ref="2">
    <original>Q</original>
    <variation>V</variation>
    <location>
        <position position="212"/>
    </location>
</feature>
<feature type="sequence conflict" description="In Ref. 2; AAA74657." evidence="6" ref="2">
    <original>I</original>
    <variation>M</variation>
    <location>
        <position position="215"/>
    </location>
</feature>
<feature type="sequence conflict" description="In Ref. 2; AAA74657." evidence="6" ref="2">
    <original>G</original>
    <variation>V</variation>
    <location>
        <position position="222"/>
    </location>
</feature>
<feature type="sequence conflict" description="In Ref. 2; AAA74657." evidence="6" ref="2">
    <original>G</original>
    <variation>A</variation>
    <location>
        <position position="233"/>
    </location>
</feature>
<feature type="sequence conflict" description="In Ref. 2; AAA74657." evidence="6" ref="2">
    <original>Q</original>
    <variation>K</variation>
    <location>
        <position position="238"/>
    </location>
</feature>
<feature type="sequence conflict" description="In Ref. 2; AAA74657." evidence="6" ref="2">
    <original>R</original>
    <variation>S</variation>
    <location>
        <position position="285"/>
    </location>
</feature>
<keyword id="KW-0010">Activator</keyword>
<keyword id="KW-0238">DNA-binding</keyword>
<keyword id="KW-0371">Homeobox</keyword>
<keyword id="KW-0539">Nucleus</keyword>
<keyword id="KW-1185">Reference proteome</keyword>
<keyword id="KW-0804">Transcription</keyword>
<keyword id="KW-0805">Transcription regulation</keyword>
<evidence type="ECO:0000250" key="1">
    <source>
        <dbReference type="UniProtKB" id="P09086"/>
    </source>
</evidence>
<evidence type="ECO:0000250" key="2">
    <source>
        <dbReference type="UniProtKB" id="Q00196"/>
    </source>
</evidence>
<evidence type="ECO:0000255" key="3">
    <source>
        <dbReference type="PROSITE-ProRule" id="PRU00108"/>
    </source>
</evidence>
<evidence type="ECO:0000255" key="4">
    <source>
        <dbReference type="PROSITE-ProRule" id="PRU00530"/>
    </source>
</evidence>
<evidence type="ECO:0000256" key="5">
    <source>
        <dbReference type="SAM" id="MobiDB-lite"/>
    </source>
</evidence>
<evidence type="ECO:0000305" key="6"/>
<comment type="function">
    <text evidence="1 2">Transcription factor that specifically binds to the octamer motif (5'-ATTTGCAT-3'). Regulates IL6 expression in B cells with POU2AF1. Regulates transcription in a number of tissues in addition to activating immunoglobulin gene expression. Modulates transcription transactivation by NR3C1, AR and PGR.</text>
</comment>
<comment type="activity regulation">
    <text evidence="2">Transactivation activity is enhanced by transcriptional coactivator POU2AF1.</text>
</comment>
<comment type="subunit">
    <text evidence="1">Interacts with NR3C1, AR and PGR. Interacts with POU2AF1; the interaction increases POU2F2 transactivation activity.</text>
</comment>
<comment type="subcellular location">
    <subcellularLocation>
        <location>Nucleus</location>
    </subcellularLocation>
</comment>
<comment type="tissue specificity">
    <text>Predominantly expressed in B-cells.</text>
</comment>
<comment type="similarity">
    <text evidence="6">Belongs to the POU transcription factor family. Class-2 subfamily.</text>
</comment>
<sequence>MVHSSMGAPEIRMSKPLEAEKQGLDSPSEHTDTERNGPDTNHQNPQNKTSPFSVSPTGPSTKIKAEDPSGDSAPAGPPPPQAVQAHLSQVQLMLTGRQLAGDIQQILQLQQLVLVPGHHLQPPAQFLLPQAQQSQPGLLPTPNLFQLPQQTQGALLTSQPRAGLPTQAVTRPTLSDPHLSHPQPPKCLEPPSHPEEASDLEELEQFARTFKQRRIKLGFTQGDVGLAMGKLYGNDFSQTTISRFEALNLSFKNMCKLKPLLEKWLNDAETMSVDSSLPSPNQLSRPSLGFDGLPGRRRKKRTSIETNVRFALEKSFLANQKPTSEEILLIAEQLHMEKEVIRVWFCNRRQKEKRINPCSAAPMLPSPGKPASYSPHLVTPQGGAGTLPLSQASSSLSTTVTTLSSAVGTLHPSRTAGGGAAGGGAAPPLNSIPSVTPPPPATTNSTNPSPQGSHSAIGLSGLNPSTGPGLWNPAPYQP</sequence>
<accession>Q29013</accession>
<accession>Q29089</accession>